<sequence length="148" mass="17491">MYVENSYLSKQLCFLFYVSSKEIIKKYTDYLKEYGLTYTGYIVLMAIEDDEKLNIKKLGERVFLDSGTLTPLLKKLEKKNYVIRTREEQDERNLQISLTERGKDIQNVLSDISQSVFNEFNITQEETQNLVEDLQNFVTKNFDKTVEK</sequence>
<name>SARZ_STAEQ</name>
<accession>Q5HLK8</accession>
<reference key="1">
    <citation type="journal article" date="2005" name="J. Bacteriol.">
        <title>Insights on evolution of virulence and resistance from the complete genome analysis of an early methicillin-resistant Staphylococcus aureus strain and a biofilm-producing methicillin-resistant Staphylococcus epidermidis strain.</title>
        <authorList>
            <person name="Gill S.R."/>
            <person name="Fouts D.E."/>
            <person name="Archer G.L."/>
            <person name="Mongodin E.F."/>
            <person name="DeBoy R.T."/>
            <person name="Ravel J."/>
            <person name="Paulsen I.T."/>
            <person name="Kolonay J.F."/>
            <person name="Brinkac L.M."/>
            <person name="Beanan M.J."/>
            <person name="Dodson R.J."/>
            <person name="Daugherty S.C."/>
            <person name="Madupu R."/>
            <person name="Angiuoli S.V."/>
            <person name="Durkin A.S."/>
            <person name="Haft D.H."/>
            <person name="Vamathevan J.J."/>
            <person name="Khouri H."/>
            <person name="Utterback T.R."/>
            <person name="Lee C."/>
            <person name="Dimitrov G."/>
            <person name="Jiang L."/>
            <person name="Qin H."/>
            <person name="Weidman J."/>
            <person name="Tran K."/>
            <person name="Kang K.H."/>
            <person name="Hance I.R."/>
            <person name="Nelson K.E."/>
            <person name="Fraser C.M."/>
        </authorList>
    </citation>
    <scope>NUCLEOTIDE SEQUENCE [LARGE SCALE GENOMIC DNA]</scope>
    <source>
        <strain>ATCC 35984 / DSM 28319 / BCRC 17069 / CCUG 31568 / BM 3577 / RP62A</strain>
    </source>
</reference>
<dbReference type="EMBL" id="CP000029">
    <property type="protein sequence ID" value="AAW52884.1"/>
    <property type="molecule type" value="Genomic_DNA"/>
</dbReference>
<dbReference type="RefSeq" id="WP_002438330.1">
    <property type="nucleotide sequence ID" value="NC_002976.3"/>
</dbReference>
<dbReference type="SMR" id="Q5HLK8"/>
<dbReference type="STRING" id="176279.SERP1979"/>
<dbReference type="KEGG" id="ser:SERP1979"/>
<dbReference type="eggNOG" id="COG1846">
    <property type="taxonomic scope" value="Bacteria"/>
</dbReference>
<dbReference type="HOGENOM" id="CLU_083287_3_2_9"/>
<dbReference type="Proteomes" id="UP000000531">
    <property type="component" value="Chromosome"/>
</dbReference>
<dbReference type="GO" id="GO:0005737">
    <property type="term" value="C:cytoplasm"/>
    <property type="evidence" value="ECO:0007669"/>
    <property type="project" value="UniProtKB-SubCell"/>
</dbReference>
<dbReference type="GO" id="GO:0003677">
    <property type="term" value="F:DNA binding"/>
    <property type="evidence" value="ECO:0007669"/>
    <property type="project" value="UniProtKB-KW"/>
</dbReference>
<dbReference type="GO" id="GO:0003700">
    <property type="term" value="F:DNA-binding transcription factor activity"/>
    <property type="evidence" value="ECO:0007669"/>
    <property type="project" value="InterPro"/>
</dbReference>
<dbReference type="FunFam" id="1.10.10.10:FF:000163">
    <property type="entry name" value="MarR family transcriptional regulator"/>
    <property type="match status" value="1"/>
</dbReference>
<dbReference type="Gene3D" id="1.10.10.10">
    <property type="entry name" value="Winged helix-like DNA-binding domain superfamily/Winged helix DNA-binding domain"/>
    <property type="match status" value="1"/>
</dbReference>
<dbReference type="InterPro" id="IPR000835">
    <property type="entry name" value="HTH_MarR-typ"/>
</dbReference>
<dbReference type="InterPro" id="IPR055166">
    <property type="entry name" value="Transc_reg_Sar_Rot_HTH"/>
</dbReference>
<dbReference type="InterPro" id="IPR036388">
    <property type="entry name" value="WH-like_DNA-bd_sf"/>
</dbReference>
<dbReference type="InterPro" id="IPR036390">
    <property type="entry name" value="WH_DNA-bd_sf"/>
</dbReference>
<dbReference type="PANTHER" id="PTHR42756">
    <property type="entry name" value="TRANSCRIPTIONAL REGULATOR, MARR"/>
    <property type="match status" value="1"/>
</dbReference>
<dbReference type="PANTHER" id="PTHR42756:SF1">
    <property type="entry name" value="TRANSCRIPTIONAL REPRESSOR OF EMRAB OPERON"/>
    <property type="match status" value="1"/>
</dbReference>
<dbReference type="Pfam" id="PF22381">
    <property type="entry name" value="Staph_reg_Sar_Rot"/>
    <property type="match status" value="1"/>
</dbReference>
<dbReference type="PRINTS" id="PR00598">
    <property type="entry name" value="HTHMARR"/>
</dbReference>
<dbReference type="SMART" id="SM00347">
    <property type="entry name" value="HTH_MARR"/>
    <property type="match status" value="1"/>
</dbReference>
<dbReference type="SUPFAM" id="SSF46785">
    <property type="entry name" value="Winged helix' DNA-binding domain"/>
    <property type="match status" value="1"/>
</dbReference>
<dbReference type="PROSITE" id="PS50995">
    <property type="entry name" value="HTH_MARR_2"/>
    <property type="match status" value="1"/>
</dbReference>
<comment type="subcellular location">
    <subcellularLocation>
        <location evidence="1">Cytoplasm</location>
    </subcellularLocation>
</comment>
<comment type="similarity">
    <text evidence="3">Belongs to the SarZ family.</text>
</comment>
<organism>
    <name type="scientific">Staphylococcus epidermidis (strain ATCC 35984 / DSM 28319 / BCRC 17069 / CCUG 31568 / BM 3577 / RP62A)</name>
    <dbReference type="NCBI Taxonomy" id="176279"/>
    <lineage>
        <taxon>Bacteria</taxon>
        <taxon>Bacillati</taxon>
        <taxon>Bacillota</taxon>
        <taxon>Bacilli</taxon>
        <taxon>Bacillales</taxon>
        <taxon>Staphylococcaceae</taxon>
        <taxon>Staphylococcus</taxon>
    </lineage>
</organism>
<feature type="chain" id="PRO_0000284464" description="HTH-type transcriptional regulator SarZ">
    <location>
        <begin position="1"/>
        <end position="148"/>
    </location>
</feature>
<feature type="domain" description="HTH marR-type" evidence="2">
    <location>
        <begin position="9"/>
        <end position="139"/>
    </location>
</feature>
<feature type="DNA-binding region" description="H-T-H motif" evidence="2">
    <location>
        <begin position="55"/>
        <end position="78"/>
    </location>
</feature>
<gene>
    <name type="primary">sarZ</name>
    <name type="ordered locus">SERP1979</name>
</gene>
<keyword id="KW-0963">Cytoplasm</keyword>
<keyword id="KW-0238">DNA-binding</keyword>
<keyword id="KW-1185">Reference proteome</keyword>
<keyword id="KW-0804">Transcription</keyword>
<keyword id="KW-0805">Transcription regulation</keyword>
<evidence type="ECO:0000250" key="1"/>
<evidence type="ECO:0000255" key="2">
    <source>
        <dbReference type="PROSITE-ProRule" id="PRU00345"/>
    </source>
</evidence>
<evidence type="ECO:0000305" key="3"/>
<proteinExistence type="inferred from homology"/>
<protein>
    <recommendedName>
        <fullName>HTH-type transcriptional regulator SarZ</fullName>
    </recommendedName>
    <alternativeName>
        <fullName>Staphylococcal accessory regulator Z</fullName>
    </alternativeName>
</protein>